<evidence type="ECO:0000255" key="1">
    <source>
        <dbReference type="PROSITE-ProRule" id="PRU00042"/>
    </source>
</evidence>
<evidence type="ECO:0000256" key="2">
    <source>
        <dbReference type="SAM" id="MobiDB-lite"/>
    </source>
</evidence>
<evidence type="ECO:0000269" key="3">
    <source>
    </source>
</evidence>
<evidence type="ECO:0000303" key="4">
    <source>
    </source>
</evidence>
<evidence type="ECO:0000303" key="5">
    <source ref="3"/>
</evidence>
<evidence type="ECO:0000305" key="6"/>
<gene>
    <name type="primary">chn</name>
    <name type="ORF">CG11798</name>
</gene>
<name>CHN_DROME</name>
<accession>Q7YU81</accession>
<accession>A4UZH6</accession>
<accession>Q0E968</accession>
<accession>Q5BHY4</accession>
<accession>Q8T065</accession>
<accession>Q95RE7</accession>
<accession>Q9V788</accession>
<feature type="chain" id="PRO_0000046916" description="Protein charlatan">
    <location>
        <begin position="1"/>
        <end position="1214"/>
    </location>
</feature>
<feature type="zinc finger region" description="C2H2-type 1" evidence="1">
    <location>
        <begin position="305"/>
        <end position="327"/>
    </location>
</feature>
<feature type="zinc finger region" description="C2H2-type 2" evidence="1">
    <location>
        <begin position="333"/>
        <end position="356"/>
    </location>
</feature>
<feature type="zinc finger region" description="C2H2-type 3" evidence="1">
    <location>
        <begin position="496"/>
        <end position="518"/>
    </location>
</feature>
<feature type="zinc finger region" description="C2H2-type 4" evidence="1">
    <location>
        <begin position="522"/>
        <end position="545"/>
    </location>
</feature>
<feature type="region of interest" description="Disordered" evidence="2">
    <location>
        <begin position="1"/>
        <end position="20"/>
    </location>
</feature>
<feature type="region of interest" description="Disordered" evidence="2">
    <location>
        <begin position="213"/>
        <end position="238"/>
    </location>
</feature>
<feature type="region of interest" description="Disordered" evidence="2">
    <location>
        <begin position="250"/>
        <end position="284"/>
    </location>
</feature>
<feature type="region of interest" description="Disordered" evidence="2">
    <location>
        <begin position="367"/>
        <end position="397"/>
    </location>
</feature>
<feature type="region of interest" description="Disordered" evidence="2">
    <location>
        <begin position="463"/>
        <end position="488"/>
    </location>
</feature>
<feature type="region of interest" description="Disordered" evidence="2">
    <location>
        <begin position="741"/>
        <end position="790"/>
    </location>
</feature>
<feature type="region of interest" description="Disordered" evidence="2">
    <location>
        <begin position="848"/>
        <end position="946"/>
    </location>
</feature>
<feature type="region of interest" description="Disordered" evidence="2">
    <location>
        <begin position="1062"/>
        <end position="1084"/>
    </location>
</feature>
<feature type="compositionally biased region" description="Low complexity" evidence="2">
    <location>
        <begin position="258"/>
        <end position="276"/>
    </location>
</feature>
<feature type="compositionally biased region" description="Gly residues" evidence="2">
    <location>
        <begin position="473"/>
        <end position="485"/>
    </location>
</feature>
<feature type="compositionally biased region" description="Low complexity" evidence="2">
    <location>
        <begin position="855"/>
        <end position="871"/>
    </location>
</feature>
<feature type="compositionally biased region" description="Low complexity" evidence="2">
    <location>
        <begin position="885"/>
        <end position="896"/>
    </location>
</feature>
<feature type="compositionally biased region" description="Low complexity" evidence="2">
    <location>
        <begin position="923"/>
        <end position="946"/>
    </location>
</feature>
<feature type="compositionally biased region" description="Low complexity" evidence="2">
    <location>
        <begin position="1071"/>
        <end position="1084"/>
    </location>
</feature>
<feature type="splice variant" id="VSP_029165" description="In isoform A." evidence="4 5">
    <location>
        <begin position="572"/>
        <end position="677"/>
    </location>
</feature>
<feature type="splice variant" id="VSP_029166" description="In isoform D." evidence="6">
    <original>GNVGNANGGGGAVTIYTTTTNEGVAGGGGGGGGGISGNISGGGPLQEIIVNPSSMVGWRLSANGSLIPP</original>
    <variation>PHDNRPARSGNGNQSGGSSSGNSNGNGGGNGNNNANAGGHSQNLNVLRTIGNSLVANNQLNTYAGNAFG</variation>
    <location>
        <begin position="572"/>
        <end position="640"/>
    </location>
</feature>
<feature type="splice variant" id="VSP_029167" description="In isoform D." evidence="6">
    <location>
        <begin position="641"/>
        <end position="1214"/>
    </location>
</feature>
<feature type="sequence conflict" description="In Ref. 3; AAQ22408." evidence="6" ref="3">
    <original>S</original>
    <variation>T</variation>
    <location>
        <position position="204"/>
    </location>
</feature>
<feature type="sequence conflict" description="In Ref. 3; AAQ22408." evidence="6" ref="3">
    <original>S</original>
    <variation>G</variation>
    <location>
        <position position="743"/>
    </location>
</feature>
<proteinExistence type="evidence at protein level"/>
<protein>
    <recommendedName>
        <fullName>Protein charlatan</fullName>
    </recommendedName>
</protein>
<dbReference type="EMBL" id="AE013599">
    <property type="protein sequence ID" value="AAF58171.1"/>
    <property type="molecule type" value="Genomic_DNA"/>
</dbReference>
<dbReference type="EMBL" id="AE013599">
    <property type="protein sequence ID" value="AAS64853.1"/>
    <property type="molecule type" value="Genomic_DNA"/>
</dbReference>
<dbReference type="EMBL" id="AE013599">
    <property type="protein sequence ID" value="ABI31095.1"/>
    <property type="molecule type" value="Genomic_DNA"/>
</dbReference>
<dbReference type="EMBL" id="AE013599">
    <property type="protein sequence ID" value="ABI31096.1"/>
    <property type="molecule type" value="Genomic_DNA"/>
</dbReference>
<dbReference type="EMBL" id="BT009939">
    <property type="protein sequence ID" value="AAQ22408.1"/>
    <property type="molecule type" value="mRNA"/>
</dbReference>
<dbReference type="EMBL" id="BT021440">
    <property type="protein sequence ID" value="AAX33588.1"/>
    <property type="molecule type" value="mRNA"/>
</dbReference>
<dbReference type="EMBL" id="AY061436">
    <property type="protein sequence ID" value="AAL28984.1"/>
    <property type="status" value="ALT_INIT"/>
    <property type="molecule type" value="mRNA"/>
</dbReference>
<dbReference type="EMBL" id="AY069524">
    <property type="protein sequence ID" value="AAL39669.1"/>
    <property type="status" value="ALT_INIT"/>
    <property type="molecule type" value="mRNA"/>
</dbReference>
<dbReference type="RefSeq" id="NP_001036546.1">
    <molecule id="Q7YU81-3"/>
    <property type="nucleotide sequence ID" value="NM_001043081.2"/>
</dbReference>
<dbReference type="RefSeq" id="NP_001036547.1">
    <molecule id="Q7YU81-1"/>
    <property type="nucleotide sequence ID" value="NM_001043082.2"/>
</dbReference>
<dbReference type="RefSeq" id="NP_611013.1">
    <molecule id="Q7YU81-2"/>
    <property type="nucleotide sequence ID" value="NM_137169.4"/>
</dbReference>
<dbReference type="RefSeq" id="NP_995841.1">
    <molecule id="Q7YU81-2"/>
    <property type="nucleotide sequence ID" value="NM_206119.2"/>
</dbReference>
<dbReference type="BioGRID" id="62418">
    <property type="interactions" value="37"/>
</dbReference>
<dbReference type="FunCoup" id="Q7YU81">
    <property type="interactions" value="300"/>
</dbReference>
<dbReference type="IntAct" id="Q7YU81">
    <property type="interactions" value="16"/>
</dbReference>
<dbReference type="STRING" id="7227.FBpp0293745"/>
<dbReference type="GlyGen" id="Q7YU81">
    <property type="glycosylation" value="1 site"/>
</dbReference>
<dbReference type="PaxDb" id="7227-FBpp0293744"/>
<dbReference type="DNASU" id="36678"/>
<dbReference type="EnsemblMetazoa" id="FBtr0087415">
    <molecule id="Q7YU81-2"/>
    <property type="protein sequence ID" value="FBpp0086546"/>
    <property type="gene ID" value="FBgn0015371"/>
</dbReference>
<dbReference type="EnsemblMetazoa" id="FBtr0087416">
    <molecule id="Q7YU81-2"/>
    <property type="protein sequence ID" value="FBpp0086547"/>
    <property type="gene ID" value="FBgn0015371"/>
</dbReference>
<dbReference type="EnsemblMetazoa" id="FBtr0111006">
    <molecule id="Q7YU81-1"/>
    <property type="protein sequence ID" value="FBpp0110305"/>
    <property type="gene ID" value="FBgn0015371"/>
</dbReference>
<dbReference type="EnsemblMetazoa" id="FBtr0111007">
    <molecule id="Q7YU81-3"/>
    <property type="protein sequence ID" value="FBpp0110306"/>
    <property type="gene ID" value="FBgn0015371"/>
</dbReference>
<dbReference type="GeneID" id="36678"/>
<dbReference type="KEGG" id="dme:Dmel_CG11798"/>
<dbReference type="AGR" id="FB:FBgn0015371"/>
<dbReference type="CTD" id="36678"/>
<dbReference type="FlyBase" id="FBgn0015371">
    <property type="gene designation" value="chn"/>
</dbReference>
<dbReference type="VEuPathDB" id="VectorBase:FBgn0015371"/>
<dbReference type="eggNOG" id="KOG1721">
    <property type="taxonomic scope" value="Eukaryota"/>
</dbReference>
<dbReference type="InParanoid" id="Q7YU81"/>
<dbReference type="OMA" id="HNAGNAF"/>
<dbReference type="OrthoDB" id="654211at2759"/>
<dbReference type="Reactome" id="R-DME-212436">
    <property type="pathway name" value="Generic Transcription Pathway"/>
</dbReference>
<dbReference type="SignaLink" id="Q7YU81"/>
<dbReference type="BioGRID-ORCS" id="36678">
    <property type="hits" value="0 hits in 1 CRISPR screen"/>
</dbReference>
<dbReference type="GenomeRNAi" id="36678"/>
<dbReference type="PRO" id="PR:Q7YU81"/>
<dbReference type="Proteomes" id="UP000000803">
    <property type="component" value="Chromosome 2R"/>
</dbReference>
<dbReference type="Bgee" id="FBgn0015371">
    <property type="expression patterns" value="Expressed in lamina monopolar neuron L5 (Drosophila) in insect head and 283 other cell types or tissues"/>
</dbReference>
<dbReference type="ExpressionAtlas" id="Q7YU81">
    <property type="expression patterns" value="baseline and differential"/>
</dbReference>
<dbReference type="GO" id="GO:0005634">
    <property type="term" value="C:nucleus"/>
    <property type="evidence" value="ECO:0007005"/>
    <property type="project" value="FlyBase"/>
</dbReference>
<dbReference type="GO" id="GO:0000981">
    <property type="term" value="F:DNA-binding transcription factor activity, RNA polymerase II-specific"/>
    <property type="evidence" value="ECO:0000314"/>
    <property type="project" value="UniProtKB"/>
</dbReference>
<dbReference type="GO" id="GO:0001227">
    <property type="term" value="F:DNA-binding transcription repressor activity, RNA polymerase II-specific"/>
    <property type="evidence" value="ECO:0000314"/>
    <property type="project" value="FlyBase"/>
</dbReference>
<dbReference type="GO" id="GO:0043565">
    <property type="term" value="F:sequence-specific DNA binding"/>
    <property type="evidence" value="ECO:0000314"/>
    <property type="project" value="FlyBase"/>
</dbReference>
<dbReference type="GO" id="GO:0008270">
    <property type="term" value="F:zinc ion binding"/>
    <property type="evidence" value="ECO:0007669"/>
    <property type="project" value="UniProtKB-KW"/>
</dbReference>
<dbReference type="GO" id="GO:0048813">
    <property type="term" value="P:dendrite morphogenesis"/>
    <property type="evidence" value="ECO:0000315"/>
    <property type="project" value="FlyBase"/>
</dbReference>
<dbReference type="GO" id="GO:0001700">
    <property type="term" value="P:embryonic development via the syncytial blastoderm"/>
    <property type="evidence" value="ECO:0000315"/>
    <property type="project" value="UniProtKB"/>
</dbReference>
<dbReference type="GO" id="GO:0001654">
    <property type="term" value="P:eye development"/>
    <property type="evidence" value="ECO:0000315"/>
    <property type="project" value="FlyBase"/>
</dbReference>
<dbReference type="GO" id="GO:0007526">
    <property type="term" value="P:larval somatic muscle development"/>
    <property type="evidence" value="ECO:0000315"/>
    <property type="project" value="FlyBase"/>
</dbReference>
<dbReference type="GO" id="GO:0042683">
    <property type="term" value="P:negative regulation of compound eye cone cell fate specification"/>
    <property type="evidence" value="ECO:0000315"/>
    <property type="project" value="FlyBase"/>
</dbReference>
<dbReference type="GO" id="GO:0000122">
    <property type="term" value="P:negative regulation of transcription by RNA polymerase II"/>
    <property type="evidence" value="ECO:0000314"/>
    <property type="project" value="FlyBase"/>
</dbReference>
<dbReference type="GO" id="GO:0007422">
    <property type="term" value="P:peripheral nervous system development"/>
    <property type="evidence" value="ECO:0000315"/>
    <property type="project" value="UniProtKB"/>
</dbReference>
<dbReference type="GO" id="GO:0045944">
    <property type="term" value="P:positive regulation of transcription by RNA polymerase II"/>
    <property type="evidence" value="ECO:0000315"/>
    <property type="project" value="UniProtKB"/>
</dbReference>
<dbReference type="GO" id="GO:0007458">
    <property type="term" value="P:progression of morphogenetic furrow involved in compound eye morphogenesis"/>
    <property type="evidence" value="ECO:0000315"/>
    <property type="project" value="FlyBase"/>
</dbReference>
<dbReference type="GO" id="GO:0006357">
    <property type="term" value="P:regulation of transcription by RNA polymerase II"/>
    <property type="evidence" value="ECO:0000318"/>
    <property type="project" value="GO_Central"/>
</dbReference>
<dbReference type="GO" id="GO:0007423">
    <property type="term" value="P:sensory organ development"/>
    <property type="evidence" value="ECO:0000315"/>
    <property type="project" value="UniProtKB"/>
</dbReference>
<dbReference type="FunFam" id="3.30.160.60:FF:001924">
    <property type="entry name" value="Charlatan, isoform F"/>
    <property type="match status" value="1"/>
</dbReference>
<dbReference type="Gene3D" id="3.30.160.60">
    <property type="entry name" value="Classic Zinc Finger"/>
    <property type="match status" value="2"/>
</dbReference>
<dbReference type="InterPro" id="IPR050331">
    <property type="entry name" value="Zinc_finger"/>
</dbReference>
<dbReference type="InterPro" id="IPR036236">
    <property type="entry name" value="Znf_C2H2_sf"/>
</dbReference>
<dbReference type="InterPro" id="IPR013087">
    <property type="entry name" value="Znf_C2H2_type"/>
</dbReference>
<dbReference type="PANTHER" id="PTHR16515">
    <property type="entry name" value="PR DOMAIN ZINC FINGER PROTEIN"/>
    <property type="match status" value="1"/>
</dbReference>
<dbReference type="PANTHER" id="PTHR16515:SF19">
    <property type="entry name" value="PR DOMAIN ZINC FINGER PROTEIN 14"/>
    <property type="match status" value="1"/>
</dbReference>
<dbReference type="SMART" id="SM00355">
    <property type="entry name" value="ZnF_C2H2"/>
    <property type="match status" value="6"/>
</dbReference>
<dbReference type="SUPFAM" id="SSF57667">
    <property type="entry name" value="beta-beta-alpha zinc fingers"/>
    <property type="match status" value="2"/>
</dbReference>
<dbReference type="PROSITE" id="PS00028">
    <property type="entry name" value="ZINC_FINGER_C2H2_1"/>
    <property type="match status" value="1"/>
</dbReference>
<dbReference type="PROSITE" id="PS50157">
    <property type="entry name" value="ZINC_FINGER_C2H2_2"/>
    <property type="match status" value="2"/>
</dbReference>
<organism>
    <name type="scientific">Drosophila melanogaster</name>
    <name type="common">Fruit fly</name>
    <dbReference type="NCBI Taxonomy" id="7227"/>
    <lineage>
        <taxon>Eukaryota</taxon>
        <taxon>Metazoa</taxon>
        <taxon>Ecdysozoa</taxon>
        <taxon>Arthropoda</taxon>
        <taxon>Hexapoda</taxon>
        <taxon>Insecta</taxon>
        <taxon>Pterygota</taxon>
        <taxon>Neoptera</taxon>
        <taxon>Endopterygota</taxon>
        <taxon>Diptera</taxon>
        <taxon>Brachycera</taxon>
        <taxon>Muscomorpha</taxon>
        <taxon>Ephydroidea</taxon>
        <taxon>Drosophilidae</taxon>
        <taxon>Drosophila</taxon>
        <taxon>Sophophora</taxon>
    </lineage>
</organism>
<sequence length="1214" mass="130303">MATLIPVNGGHPAASGQSSNVEATYEDMFKEITRKLYGEETGNGLHTLGTPVAQVATSGPTAVPEGEQRSFTNLQQLDRSAAPSIEYESSAAGASGNNVATTQANVIQQQQQQQQQAESGNSVVVTASSGATVVPAPSVAAVGGFKSEDHLSTAFGLAALMQNGFAAGQAGLLKAGEQQQRWAQDGSGLVAAAAAEPQLVQWTSGGKLQSYAHVNQQQQQQQQPHQSTPKSKKHRQEHAAELIYASPSTSANAAQNLAQSTPTSAPSNSSGGSTSSSGGGGGRKKAAQAAAAAAAANGVHIQKRYACTHCPYSTDRRDLYTRHENIHKDEKPFQCYACLKQFNRADHVKKHFLRMHRELQYDINKTRRHVSAGSGSSGSGSSGSGSHHSGGRGNVTINSAGVNIDNAFLEAQRHPTSSSMSIVETIEAVASATDMPLAQLKQEKMDDGAGVVLPLHVGVMQQPVASSSSGSSGSHGGNGNGGSGSGLLKPKREKRFTCCYCPWSGADKWGLKRHLNTHTKPFVCLLCDYKAARSERLATHVLKVHNKRACSKCSYLADTQEEYQAHMSDVHGNVGNANGGGGAVTIYTTTTNEGVAGGGGGGGGGISGNISGGGPLQEIIVNPSSMVGWRLSANGSLIPPHDLLTGGLPNAATQKRGSERLFQYLEAEGSDPEDYARLLKMDAISRNTASVAQDFHKAGGVHELKIPANHQLLFNNKLPSQWTTREAAALLYSLSNMGGGSASSVSGSQRQKFGMRARQHSTGEDDENTPSSASSSSFSGDEFNMSATSPLKLSRHAIKLEKMDEMDAKDMGPTKAMMATAFLEAANYEQTAIELLASKRKIKVENDNDEDQENQQHQPHQQHHSQQQQQQRLQLIKSSPAYKLNNNNNNNSNNNNYYKDKTSHRNAVHHHRQDDKENNKTKSPGTAAVSVAAAAATSPPSISGPSNQTPFLTQMEYQNLNRIGTQFQNYVKDIINKYYAAETPLMLAAAAAALPTATTTGQQQQPELDIENLSPSKRRRLLSETEEYIEYLRNKEDITLTIAPKVQPPAPVTSLLKRQLDLSTPRRSPKKAAPAHSNSASNASRKSLNQLATLLPLLADAASQQEYLAAPLDFSKKSSSRKQAQPKKIRLTPEAVVTLLRDKYLNRMVRQRLGCLKCNQLRKNSSISFNYHTLGSLALHKYWRHGRLGSSSTRREKLQAALQKRISRGQADKC</sequence>
<reference key="1">
    <citation type="journal article" date="2000" name="Science">
        <title>The genome sequence of Drosophila melanogaster.</title>
        <authorList>
            <person name="Adams M.D."/>
            <person name="Celniker S.E."/>
            <person name="Holt R.A."/>
            <person name="Evans C.A."/>
            <person name="Gocayne J.D."/>
            <person name="Amanatides P.G."/>
            <person name="Scherer S.E."/>
            <person name="Li P.W."/>
            <person name="Hoskins R.A."/>
            <person name="Galle R.F."/>
            <person name="George R.A."/>
            <person name="Lewis S.E."/>
            <person name="Richards S."/>
            <person name="Ashburner M."/>
            <person name="Henderson S.N."/>
            <person name="Sutton G.G."/>
            <person name="Wortman J.R."/>
            <person name="Yandell M.D."/>
            <person name="Zhang Q."/>
            <person name="Chen L.X."/>
            <person name="Brandon R.C."/>
            <person name="Rogers Y.-H.C."/>
            <person name="Blazej R.G."/>
            <person name="Champe M."/>
            <person name="Pfeiffer B.D."/>
            <person name="Wan K.H."/>
            <person name="Doyle C."/>
            <person name="Baxter E.G."/>
            <person name="Helt G."/>
            <person name="Nelson C.R."/>
            <person name="Miklos G.L.G."/>
            <person name="Abril J.F."/>
            <person name="Agbayani A."/>
            <person name="An H.-J."/>
            <person name="Andrews-Pfannkoch C."/>
            <person name="Baldwin D."/>
            <person name="Ballew R.M."/>
            <person name="Basu A."/>
            <person name="Baxendale J."/>
            <person name="Bayraktaroglu L."/>
            <person name="Beasley E.M."/>
            <person name="Beeson K.Y."/>
            <person name="Benos P.V."/>
            <person name="Berman B.P."/>
            <person name="Bhandari D."/>
            <person name="Bolshakov S."/>
            <person name="Borkova D."/>
            <person name="Botchan M.R."/>
            <person name="Bouck J."/>
            <person name="Brokstein P."/>
            <person name="Brottier P."/>
            <person name="Burtis K.C."/>
            <person name="Busam D.A."/>
            <person name="Butler H."/>
            <person name="Cadieu E."/>
            <person name="Center A."/>
            <person name="Chandra I."/>
            <person name="Cherry J.M."/>
            <person name="Cawley S."/>
            <person name="Dahlke C."/>
            <person name="Davenport L.B."/>
            <person name="Davies P."/>
            <person name="de Pablos B."/>
            <person name="Delcher A."/>
            <person name="Deng Z."/>
            <person name="Mays A.D."/>
            <person name="Dew I."/>
            <person name="Dietz S.M."/>
            <person name="Dodson K."/>
            <person name="Doup L.E."/>
            <person name="Downes M."/>
            <person name="Dugan-Rocha S."/>
            <person name="Dunkov B.C."/>
            <person name="Dunn P."/>
            <person name="Durbin K.J."/>
            <person name="Evangelista C.C."/>
            <person name="Ferraz C."/>
            <person name="Ferriera S."/>
            <person name="Fleischmann W."/>
            <person name="Fosler C."/>
            <person name="Gabrielian A.E."/>
            <person name="Garg N.S."/>
            <person name="Gelbart W.M."/>
            <person name="Glasser K."/>
            <person name="Glodek A."/>
            <person name="Gong F."/>
            <person name="Gorrell J.H."/>
            <person name="Gu Z."/>
            <person name="Guan P."/>
            <person name="Harris M."/>
            <person name="Harris N.L."/>
            <person name="Harvey D.A."/>
            <person name="Heiman T.J."/>
            <person name="Hernandez J.R."/>
            <person name="Houck J."/>
            <person name="Hostin D."/>
            <person name="Houston K.A."/>
            <person name="Howland T.J."/>
            <person name="Wei M.-H."/>
            <person name="Ibegwam C."/>
            <person name="Jalali M."/>
            <person name="Kalush F."/>
            <person name="Karpen G.H."/>
            <person name="Ke Z."/>
            <person name="Kennison J.A."/>
            <person name="Ketchum K.A."/>
            <person name="Kimmel B.E."/>
            <person name="Kodira C.D."/>
            <person name="Kraft C.L."/>
            <person name="Kravitz S."/>
            <person name="Kulp D."/>
            <person name="Lai Z."/>
            <person name="Lasko P."/>
            <person name="Lei Y."/>
            <person name="Levitsky A.A."/>
            <person name="Li J.H."/>
            <person name="Li Z."/>
            <person name="Liang Y."/>
            <person name="Lin X."/>
            <person name="Liu X."/>
            <person name="Mattei B."/>
            <person name="McIntosh T.C."/>
            <person name="McLeod M.P."/>
            <person name="McPherson D."/>
            <person name="Merkulov G."/>
            <person name="Milshina N.V."/>
            <person name="Mobarry C."/>
            <person name="Morris J."/>
            <person name="Moshrefi A."/>
            <person name="Mount S.M."/>
            <person name="Moy M."/>
            <person name="Murphy B."/>
            <person name="Murphy L."/>
            <person name="Muzny D.M."/>
            <person name="Nelson D.L."/>
            <person name="Nelson D.R."/>
            <person name="Nelson K.A."/>
            <person name="Nixon K."/>
            <person name="Nusskern D.R."/>
            <person name="Pacleb J.M."/>
            <person name="Palazzolo M."/>
            <person name="Pittman G.S."/>
            <person name="Pan S."/>
            <person name="Pollard J."/>
            <person name="Puri V."/>
            <person name="Reese M.G."/>
            <person name="Reinert K."/>
            <person name="Remington K."/>
            <person name="Saunders R.D.C."/>
            <person name="Scheeler F."/>
            <person name="Shen H."/>
            <person name="Shue B.C."/>
            <person name="Siden-Kiamos I."/>
            <person name="Simpson M."/>
            <person name="Skupski M.P."/>
            <person name="Smith T.J."/>
            <person name="Spier E."/>
            <person name="Spradling A.C."/>
            <person name="Stapleton M."/>
            <person name="Strong R."/>
            <person name="Sun E."/>
            <person name="Svirskas R."/>
            <person name="Tector C."/>
            <person name="Turner R."/>
            <person name="Venter E."/>
            <person name="Wang A.H."/>
            <person name="Wang X."/>
            <person name="Wang Z.-Y."/>
            <person name="Wassarman D.A."/>
            <person name="Weinstock G.M."/>
            <person name="Weissenbach J."/>
            <person name="Williams S.M."/>
            <person name="Woodage T."/>
            <person name="Worley K.C."/>
            <person name="Wu D."/>
            <person name="Yang S."/>
            <person name="Yao Q.A."/>
            <person name="Ye J."/>
            <person name="Yeh R.-F."/>
            <person name="Zaveri J.S."/>
            <person name="Zhan M."/>
            <person name="Zhang G."/>
            <person name="Zhao Q."/>
            <person name="Zheng L."/>
            <person name="Zheng X.H."/>
            <person name="Zhong F.N."/>
            <person name="Zhong W."/>
            <person name="Zhou X."/>
            <person name="Zhu S.C."/>
            <person name="Zhu X."/>
            <person name="Smith H.O."/>
            <person name="Gibbs R.A."/>
            <person name="Myers E.W."/>
            <person name="Rubin G.M."/>
            <person name="Venter J.C."/>
        </authorList>
    </citation>
    <scope>NUCLEOTIDE SEQUENCE [LARGE SCALE GENOMIC DNA]</scope>
    <source>
        <strain>Berkeley</strain>
    </source>
</reference>
<reference key="2">
    <citation type="journal article" date="2002" name="Genome Biol.">
        <title>Annotation of the Drosophila melanogaster euchromatic genome: a systematic review.</title>
        <authorList>
            <person name="Misra S."/>
            <person name="Crosby M.A."/>
            <person name="Mungall C.J."/>
            <person name="Matthews B.B."/>
            <person name="Campbell K.S."/>
            <person name="Hradecky P."/>
            <person name="Huang Y."/>
            <person name="Kaminker J.S."/>
            <person name="Millburn G.H."/>
            <person name="Prochnik S.E."/>
            <person name="Smith C.D."/>
            <person name="Tupy J.L."/>
            <person name="Whitfield E.J."/>
            <person name="Bayraktaroglu L."/>
            <person name="Berman B.P."/>
            <person name="Bettencourt B.R."/>
            <person name="Celniker S.E."/>
            <person name="de Grey A.D.N.J."/>
            <person name="Drysdale R.A."/>
            <person name="Harris N.L."/>
            <person name="Richter J."/>
            <person name="Russo S."/>
            <person name="Schroeder A.J."/>
            <person name="Shu S.Q."/>
            <person name="Stapleton M."/>
            <person name="Yamada C."/>
            <person name="Ashburner M."/>
            <person name="Gelbart W.M."/>
            <person name="Rubin G.M."/>
            <person name="Lewis S.E."/>
        </authorList>
    </citation>
    <scope>GENOME REANNOTATION</scope>
    <scope>ALTERNATIVE SPLICING</scope>
    <source>
        <strain>Berkeley</strain>
    </source>
</reference>
<reference key="3">
    <citation type="submission" date="2007-04" db="EMBL/GenBank/DDBJ databases">
        <authorList>
            <person name="Stapleton M."/>
            <person name="Brokstein P."/>
            <person name="Hong L."/>
            <person name="Agbayani A."/>
            <person name="Carlson J.W."/>
            <person name="Champe M."/>
            <person name="Chavez C."/>
            <person name="Dorsett V."/>
            <person name="Dresnek D."/>
            <person name="Farfan D."/>
            <person name="Frise E."/>
            <person name="George R.A."/>
            <person name="Gonzalez M."/>
            <person name="Guarin H."/>
            <person name="Kapadia B."/>
            <person name="Kronmiller B."/>
            <person name="Li P.W."/>
            <person name="Liao G."/>
            <person name="Miranda A."/>
            <person name="Mungall C.J."/>
            <person name="Nunoo J."/>
            <person name="Pacleb J.M."/>
            <person name="Paragas V."/>
            <person name="Park S."/>
            <person name="Patel S."/>
            <person name="Phouanenavong S."/>
            <person name="Wan K.H."/>
            <person name="Yu C."/>
            <person name="Lewis S.E."/>
            <person name="Rubin G.M."/>
            <person name="Celniker S.E."/>
        </authorList>
    </citation>
    <scope>NUCLEOTIDE SEQUENCE [LARGE SCALE MRNA] (ISOFORMS A AND C)</scope>
    <source>
        <strain>Berkeley</strain>
        <tissue>Embryo</tissue>
        <tissue>Head</tissue>
    </source>
</reference>
<reference key="4">
    <citation type="journal article" date="2002" name="Genome Biol.">
        <title>A Drosophila full-length cDNA resource.</title>
        <authorList>
            <person name="Stapleton M."/>
            <person name="Carlson J.W."/>
            <person name="Brokstein P."/>
            <person name="Yu C."/>
            <person name="Champe M."/>
            <person name="George R.A."/>
            <person name="Guarin H."/>
            <person name="Kronmiller B."/>
            <person name="Pacleb J.M."/>
            <person name="Park S."/>
            <person name="Wan K.H."/>
            <person name="Rubin G.M."/>
            <person name="Celniker S.E."/>
        </authorList>
    </citation>
    <scope>NUCLEOTIDE SEQUENCE [LARGE SCALE MRNA] OF 135-1214 (ISOFORM A)</scope>
    <source>
        <strain>Berkeley</strain>
        <tissue>Embryo</tissue>
    </source>
</reference>
<reference key="5">
    <citation type="journal article" date="2005" name="Development">
        <title>Charlatan, a Zn-finger transcription factor, establishes a novel level of regulation of the proneural achaete/scute genes of Drosophila.</title>
        <authorList>
            <person name="Escudero L.M."/>
            <person name="Caminero E."/>
            <person name="Schulze K.L."/>
            <person name="Bellen H.J."/>
            <person name="Modolell J."/>
        </authorList>
    </citation>
    <scope>FUNCTION</scope>
    <scope>TISSUE SPECIFICITY</scope>
    <scope>INDUCTION</scope>
</reference>
<keyword id="KW-0010">Activator</keyword>
<keyword id="KW-0025">Alternative splicing</keyword>
<keyword id="KW-0238">DNA-binding</keyword>
<keyword id="KW-0479">Metal-binding</keyword>
<keyword id="KW-0539">Nucleus</keyword>
<keyword id="KW-1185">Reference proteome</keyword>
<keyword id="KW-0677">Repeat</keyword>
<keyword id="KW-0804">Transcription</keyword>
<keyword id="KW-0805">Transcription regulation</keyword>
<keyword id="KW-0862">Zinc</keyword>
<keyword id="KW-0863">Zinc-finger</keyword>
<comment type="function">
    <text evidence="3">Probable transcription factor involved in the development of the adult pattern of macrochaetae. Required for accumulation of achaete (ac) and scute (sc) in proneural clusters. Probably acts by binding to the proneural cluster-specific enhancers of the ac/sc complex and increasing enhancer efficiency, thereby acting as a stimulator of ac/sc expression in proneural clusters. Also required for correct development of the embryonic/larval peripheral nervous system (PNS).</text>
</comment>
<comment type="interaction">
    <interactant intactId="EBI-164494">
        <id>Q7YU81</id>
    </interactant>
    <interactant intactId="EBI-869024">
        <id>Q94527</id>
        <label>Rel</label>
    </interactant>
    <organismsDiffer>false</organismsDiffer>
    <experiments>3</experiments>
</comment>
<comment type="subcellular location">
    <subcellularLocation>
        <location evidence="6">Nucleus</location>
    </subcellularLocation>
</comment>
<comment type="alternative products">
    <event type="alternative splicing"/>
    <isoform>
        <id>Q7YU81-1</id>
        <name>C</name>
        <sequence type="displayed"/>
    </isoform>
    <isoform>
        <id>Q7YU81-2</id>
        <name>A</name>
        <name>B</name>
        <sequence type="described" ref="VSP_029165"/>
    </isoform>
    <isoform>
        <id>Q7YU81-3</id>
        <name>D</name>
        <sequence type="described" ref="VSP_029166 VSP_029167"/>
    </isoform>
</comment>
<comment type="tissue specificity">
    <text evidence="3">Expressed in the PNS and CNS. In early blastoderm stages, it is ubiquitously expressed, then, before stage 5, it disappears from the poles of the embryo and faint stripes are visible. At stage 5, it also accumulates in the dorsal region, cephalic furrow ectodermal patches between the tracheal pits, where neurons of the PNS appear. In older embryos (stage 15) a strong expression is mostly restricted to the central nervous system (CNS) and PNS. In PNS, the pattern suggests that expression occur in many of the neurons of the ventral, lateral and dorsal clusters of neurons. In third instar wing disks, it is expressed in rows of cells on either side of the prospective anterior wing margin and in groups of cells that coincide with proneural clusters of ac/sc expression. Also expressed independently of ac/sc in certain areas of the disk, such as the postnotum and posterior dorsal proximal wing. Expressed in the proneural clusters of the leg disks and in the eye/antenna disk.</text>
</comment>
<comment type="induction">
    <text evidence="3">Up-regulated by ac/sc in proneural clusters of the wing disk.</text>
</comment>
<comment type="sequence caution" evidence="6">
    <conflict type="erroneous initiation">
        <sequence resource="EMBL-CDS" id="AAL28984"/>
    </conflict>
</comment>
<comment type="sequence caution" evidence="6">
    <conflict type="erroneous initiation">
        <sequence resource="EMBL-CDS" id="AAL39669"/>
    </conflict>
</comment>